<evidence type="ECO:0000255" key="1">
    <source>
        <dbReference type="HAMAP-Rule" id="MF_00052"/>
    </source>
</evidence>
<evidence type="ECO:0000255" key="2">
    <source>
        <dbReference type="PROSITE-ProRule" id="PRU01319"/>
    </source>
</evidence>
<protein>
    <recommendedName>
        <fullName evidence="1">Ribonuclease HII</fullName>
        <shortName evidence="1">RNase HII</shortName>
        <ecNumber evidence="1">3.1.26.4</ecNumber>
    </recommendedName>
</protein>
<keyword id="KW-0963">Cytoplasm</keyword>
<keyword id="KW-0255">Endonuclease</keyword>
<keyword id="KW-0378">Hydrolase</keyword>
<keyword id="KW-0464">Manganese</keyword>
<keyword id="KW-0479">Metal-binding</keyword>
<keyword id="KW-0540">Nuclease</keyword>
<feature type="chain" id="PRO_0000235793" description="Ribonuclease HII">
    <location>
        <begin position="1"/>
        <end position="224"/>
    </location>
</feature>
<feature type="domain" description="RNase H type-2" evidence="2">
    <location>
        <begin position="1"/>
        <end position="219"/>
    </location>
</feature>
<feature type="binding site" evidence="1">
    <location>
        <position position="7"/>
    </location>
    <ligand>
        <name>a divalent metal cation</name>
        <dbReference type="ChEBI" id="CHEBI:60240"/>
    </ligand>
</feature>
<feature type="binding site" evidence="1">
    <location>
        <position position="8"/>
    </location>
    <ligand>
        <name>a divalent metal cation</name>
        <dbReference type="ChEBI" id="CHEBI:60240"/>
    </ligand>
</feature>
<feature type="binding site" evidence="1">
    <location>
        <position position="105"/>
    </location>
    <ligand>
        <name>a divalent metal cation</name>
        <dbReference type="ChEBI" id="CHEBI:60240"/>
    </ligand>
</feature>
<organism>
    <name type="scientific">Methanosarcina barkeri (strain Fusaro / DSM 804)</name>
    <dbReference type="NCBI Taxonomy" id="269797"/>
    <lineage>
        <taxon>Archaea</taxon>
        <taxon>Methanobacteriati</taxon>
        <taxon>Methanobacteriota</taxon>
        <taxon>Stenosarchaea group</taxon>
        <taxon>Methanomicrobia</taxon>
        <taxon>Methanosarcinales</taxon>
        <taxon>Methanosarcinaceae</taxon>
        <taxon>Methanosarcina</taxon>
    </lineage>
</organism>
<proteinExistence type="inferred from homology"/>
<sequence length="224" mass="25149">MMIAGIDEAGKGPVIGPMCIGGVKIEESRAHILKVLGVADSKKLTPKKREQLAAQIKKHADGFFVLEVSPSQIDELRKIMTMNEIMVVCFSKVLEQLKPDLLYADAADVNAERFATNIRKQYSKTNPDHAKEIEIISMHQADATYPVVSAASIIAKVRRDELIEELKKEWGLDFGSGYPSDPKTKEFLLNWGKEHSGEFPEIVRQSWQTVENIREELKKTGNKN</sequence>
<dbReference type="EC" id="3.1.26.4" evidence="1"/>
<dbReference type="EMBL" id="CP000099">
    <property type="protein sequence ID" value="AAZ71656.1"/>
    <property type="molecule type" value="Genomic_DNA"/>
</dbReference>
<dbReference type="SMR" id="Q468N6"/>
<dbReference type="STRING" id="269797.Mbar_A2753"/>
<dbReference type="PaxDb" id="269797-Mbar_A2753"/>
<dbReference type="KEGG" id="mba:Mbar_A2753"/>
<dbReference type="eggNOG" id="arCOG04121">
    <property type="taxonomic scope" value="Archaea"/>
</dbReference>
<dbReference type="HOGENOM" id="CLU_036532_0_4_2"/>
<dbReference type="OrthoDB" id="33866at2157"/>
<dbReference type="GO" id="GO:0005737">
    <property type="term" value="C:cytoplasm"/>
    <property type="evidence" value="ECO:0007669"/>
    <property type="project" value="UniProtKB-SubCell"/>
</dbReference>
<dbReference type="GO" id="GO:0032299">
    <property type="term" value="C:ribonuclease H2 complex"/>
    <property type="evidence" value="ECO:0007669"/>
    <property type="project" value="TreeGrafter"/>
</dbReference>
<dbReference type="GO" id="GO:0030145">
    <property type="term" value="F:manganese ion binding"/>
    <property type="evidence" value="ECO:0007669"/>
    <property type="project" value="UniProtKB-UniRule"/>
</dbReference>
<dbReference type="GO" id="GO:0003723">
    <property type="term" value="F:RNA binding"/>
    <property type="evidence" value="ECO:0007669"/>
    <property type="project" value="InterPro"/>
</dbReference>
<dbReference type="GO" id="GO:0004523">
    <property type="term" value="F:RNA-DNA hybrid ribonuclease activity"/>
    <property type="evidence" value="ECO:0007669"/>
    <property type="project" value="UniProtKB-UniRule"/>
</dbReference>
<dbReference type="GO" id="GO:0043137">
    <property type="term" value="P:DNA replication, removal of RNA primer"/>
    <property type="evidence" value="ECO:0007669"/>
    <property type="project" value="TreeGrafter"/>
</dbReference>
<dbReference type="GO" id="GO:0006298">
    <property type="term" value="P:mismatch repair"/>
    <property type="evidence" value="ECO:0007669"/>
    <property type="project" value="TreeGrafter"/>
</dbReference>
<dbReference type="CDD" id="cd07180">
    <property type="entry name" value="RNase_HII_archaea_like"/>
    <property type="match status" value="1"/>
</dbReference>
<dbReference type="FunFam" id="1.10.10.460:FF:000001">
    <property type="entry name" value="Ribonuclease"/>
    <property type="match status" value="1"/>
</dbReference>
<dbReference type="FunFam" id="3.30.420.10:FF:000139">
    <property type="entry name" value="Ribonuclease HII"/>
    <property type="match status" value="1"/>
</dbReference>
<dbReference type="Gene3D" id="3.30.420.10">
    <property type="entry name" value="Ribonuclease H-like superfamily/Ribonuclease H"/>
    <property type="match status" value="1"/>
</dbReference>
<dbReference type="Gene3D" id="1.10.10.460">
    <property type="entry name" value="Ribonuclease hii. Domain 2"/>
    <property type="match status" value="1"/>
</dbReference>
<dbReference type="HAMAP" id="MF_00052_A">
    <property type="entry name" value="RNase_HII_A"/>
    <property type="match status" value="1"/>
</dbReference>
<dbReference type="InterPro" id="IPR004649">
    <property type="entry name" value="RNase_H2_suA"/>
</dbReference>
<dbReference type="InterPro" id="IPR001352">
    <property type="entry name" value="RNase_HII/HIII"/>
</dbReference>
<dbReference type="InterPro" id="IPR024567">
    <property type="entry name" value="RNase_HII/HIII_dom"/>
</dbReference>
<dbReference type="InterPro" id="IPR020787">
    <property type="entry name" value="RNase_HII_arc"/>
</dbReference>
<dbReference type="InterPro" id="IPR023160">
    <property type="entry name" value="RNase_HII_hlx-loop-hlx_cap_dom"/>
</dbReference>
<dbReference type="InterPro" id="IPR012337">
    <property type="entry name" value="RNaseH-like_sf"/>
</dbReference>
<dbReference type="InterPro" id="IPR036397">
    <property type="entry name" value="RNaseH_sf"/>
</dbReference>
<dbReference type="NCBIfam" id="TIGR00729">
    <property type="entry name" value="ribonuclease HII"/>
    <property type="match status" value="1"/>
</dbReference>
<dbReference type="PANTHER" id="PTHR10954:SF23">
    <property type="entry name" value="RIBONUCLEASE"/>
    <property type="match status" value="1"/>
</dbReference>
<dbReference type="PANTHER" id="PTHR10954">
    <property type="entry name" value="RIBONUCLEASE H2 SUBUNIT A"/>
    <property type="match status" value="1"/>
</dbReference>
<dbReference type="Pfam" id="PF01351">
    <property type="entry name" value="RNase_HII"/>
    <property type="match status" value="1"/>
</dbReference>
<dbReference type="SUPFAM" id="SSF53098">
    <property type="entry name" value="Ribonuclease H-like"/>
    <property type="match status" value="1"/>
</dbReference>
<dbReference type="PROSITE" id="PS51975">
    <property type="entry name" value="RNASE_H_2"/>
    <property type="match status" value="1"/>
</dbReference>
<comment type="function">
    <text evidence="1">Endonuclease that specifically degrades the RNA of RNA-DNA hybrids.</text>
</comment>
<comment type="catalytic activity">
    <reaction evidence="1">
        <text>Endonucleolytic cleavage to 5'-phosphomonoester.</text>
        <dbReference type="EC" id="3.1.26.4"/>
    </reaction>
</comment>
<comment type="cofactor">
    <cofactor evidence="1">
        <name>Mn(2+)</name>
        <dbReference type="ChEBI" id="CHEBI:29035"/>
    </cofactor>
    <cofactor evidence="1">
        <name>Mg(2+)</name>
        <dbReference type="ChEBI" id="CHEBI:18420"/>
    </cofactor>
    <text evidence="1">Manganese or magnesium. Binds 1 divalent metal ion per monomer in the absence of substrate. May bind a second metal ion after substrate binding.</text>
</comment>
<comment type="subcellular location">
    <subcellularLocation>
        <location evidence="1">Cytoplasm</location>
    </subcellularLocation>
</comment>
<comment type="similarity">
    <text evidence="1">Belongs to the RNase HII family.</text>
</comment>
<reference key="1">
    <citation type="journal article" date="2006" name="J. Bacteriol.">
        <title>The Methanosarcina barkeri genome: comparative analysis with Methanosarcina acetivorans and Methanosarcina mazei reveals extensive rearrangement within methanosarcinal genomes.</title>
        <authorList>
            <person name="Maeder D.L."/>
            <person name="Anderson I."/>
            <person name="Brettin T.S."/>
            <person name="Bruce D.C."/>
            <person name="Gilna P."/>
            <person name="Han C.S."/>
            <person name="Lapidus A."/>
            <person name="Metcalf W.W."/>
            <person name="Saunders E."/>
            <person name="Tapia R."/>
            <person name="Sowers K.R."/>
        </authorList>
    </citation>
    <scope>NUCLEOTIDE SEQUENCE [LARGE SCALE GENOMIC DNA]</scope>
    <source>
        <strain>Fusaro / DSM 804</strain>
    </source>
</reference>
<name>RNH2_METBF</name>
<accession>Q468N6</accession>
<gene>
    <name evidence="1" type="primary">rnhB</name>
    <name type="ordered locus">Mbar_A2753</name>
</gene>